<gene>
    <name evidence="12 15" type="primary">MDH1</name>
    <name type="synonym">MDHA</name>
</gene>
<organism>
    <name type="scientific">Homo sapiens</name>
    <name type="common">Human</name>
    <dbReference type="NCBI Taxonomy" id="9606"/>
    <lineage>
        <taxon>Eukaryota</taxon>
        <taxon>Metazoa</taxon>
        <taxon>Chordata</taxon>
        <taxon>Craniata</taxon>
        <taxon>Vertebrata</taxon>
        <taxon>Euteleostomi</taxon>
        <taxon>Mammalia</taxon>
        <taxon>Eutheria</taxon>
        <taxon>Euarchontoglires</taxon>
        <taxon>Primates</taxon>
        <taxon>Haplorrhini</taxon>
        <taxon>Catarrhini</taxon>
        <taxon>Hominidae</taxon>
        <taxon>Homo</taxon>
    </lineage>
</organism>
<keyword id="KW-0002">3D-structure</keyword>
<keyword id="KW-0007">Acetylation</keyword>
<keyword id="KW-0025">Alternative splicing</keyword>
<keyword id="KW-0963">Cytoplasm</keyword>
<keyword id="KW-0903">Direct protein sequencing</keyword>
<keyword id="KW-0225">Disease variant</keyword>
<keyword id="KW-0887">Epilepsy</keyword>
<keyword id="KW-0488">Methylation</keyword>
<keyword id="KW-0520">NAD</keyword>
<keyword id="KW-0560">Oxidoreductase</keyword>
<keyword id="KW-0597">Phosphoprotein</keyword>
<keyword id="KW-1267">Proteomics identification</keyword>
<keyword id="KW-1185">Reference proteome</keyword>
<keyword id="KW-0816">Tricarboxylic acid cycle</keyword>
<keyword id="KW-0832">Ubl conjugation</keyword>
<dbReference type="EC" id="1.1.1.37" evidence="7"/>
<dbReference type="EC" id="1.1.1.96" evidence="7"/>
<dbReference type="EMBL" id="D55654">
    <property type="protein sequence ID" value="BAA09513.1"/>
    <property type="molecule type" value="mRNA"/>
</dbReference>
<dbReference type="EMBL" id="U20352">
    <property type="protein sequence ID" value="AAC16436.1"/>
    <property type="molecule type" value="mRNA"/>
</dbReference>
<dbReference type="EMBL" id="CR457405">
    <property type="protein sequence ID" value="CAG33686.1"/>
    <property type="molecule type" value="mRNA"/>
</dbReference>
<dbReference type="EMBL" id="AK295931">
    <property type="protein sequence ID" value="BAH12223.1"/>
    <property type="molecule type" value="mRNA"/>
</dbReference>
<dbReference type="EMBL" id="AK300719">
    <property type="protein sequence ID" value="BAG62394.1"/>
    <property type="molecule type" value="mRNA"/>
</dbReference>
<dbReference type="EMBL" id="AK312331">
    <property type="protein sequence ID" value="BAG35252.1"/>
    <property type="molecule type" value="mRNA"/>
</dbReference>
<dbReference type="EMBL" id="AC016734">
    <property type="protein sequence ID" value="AAY14893.1"/>
    <property type="molecule type" value="Genomic_DNA"/>
</dbReference>
<dbReference type="EMBL" id="CH471053">
    <property type="protein sequence ID" value="EAW99959.1"/>
    <property type="molecule type" value="Genomic_DNA"/>
</dbReference>
<dbReference type="EMBL" id="BC001484">
    <property type="protein sequence ID" value="AAH01484.1"/>
    <property type="molecule type" value="mRNA"/>
</dbReference>
<dbReference type="CCDS" id="CCDS1874.1">
    <molecule id="P40925-1"/>
</dbReference>
<dbReference type="CCDS" id="CCDS56121.1">
    <molecule id="P40925-3"/>
</dbReference>
<dbReference type="PIR" id="G01650">
    <property type="entry name" value="G01650"/>
</dbReference>
<dbReference type="RefSeq" id="NP_001186040.1">
    <molecule id="P40925-3"/>
    <property type="nucleotide sequence ID" value="NM_001199111.2"/>
</dbReference>
<dbReference type="RefSeq" id="NP_001186041.1">
    <molecule id="P40925-2"/>
    <property type="nucleotide sequence ID" value="NM_001199112.2"/>
</dbReference>
<dbReference type="RefSeq" id="NP_001303303.1">
    <property type="nucleotide sequence ID" value="NM_001316374.1"/>
</dbReference>
<dbReference type="RefSeq" id="NP_005908.1">
    <molecule id="P40925-1"/>
    <property type="nucleotide sequence ID" value="NM_005917.4"/>
</dbReference>
<dbReference type="PDB" id="7RM9">
    <property type="method" value="X-ray"/>
    <property type="resolution" value="1.65 A"/>
    <property type="chains" value="A/B=1-334"/>
</dbReference>
<dbReference type="PDB" id="7RRL">
    <property type="method" value="X-ray"/>
    <property type="resolution" value="2.05 A"/>
    <property type="chains" value="A/B=1-334"/>
</dbReference>
<dbReference type="PDBsum" id="7RM9"/>
<dbReference type="PDBsum" id="7RRL"/>
<dbReference type="SMR" id="P40925"/>
<dbReference type="BioGRID" id="110355">
    <property type="interactions" value="154"/>
</dbReference>
<dbReference type="ComplexPortal" id="CPX-7142">
    <property type="entry name" value="Hydride transfer complex"/>
</dbReference>
<dbReference type="FunCoup" id="P40925">
    <property type="interactions" value="1267"/>
</dbReference>
<dbReference type="IntAct" id="P40925">
    <property type="interactions" value="42"/>
</dbReference>
<dbReference type="MINT" id="P40925"/>
<dbReference type="BindingDB" id="P40925"/>
<dbReference type="ChEMBL" id="CHEMBL3560"/>
<dbReference type="DrugBank" id="DB11638">
    <property type="generic name" value="Artenimol"/>
</dbReference>
<dbReference type="DrugBank" id="DB00157">
    <property type="generic name" value="NADH"/>
</dbReference>
<dbReference type="DrugBank" id="DB03461">
    <property type="generic name" value="Nicotinamide adenine dinucleotide phosphate"/>
</dbReference>
<dbReference type="DrugCentral" id="P40925"/>
<dbReference type="GlyGen" id="P40925">
    <property type="glycosylation" value="3 sites, 1 N-linked glycan (1 site), 1 O-linked glycan (2 sites)"/>
</dbReference>
<dbReference type="iPTMnet" id="P40925"/>
<dbReference type="MetOSite" id="P40925"/>
<dbReference type="PhosphoSitePlus" id="P40925"/>
<dbReference type="SwissPalm" id="P40925"/>
<dbReference type="BioMuta" id="MDH1"/>
<dbReference type="DMDM" id="1708967"/>
<dbReference type="REPRODUCTION-2DPAGE" id="IPI00291005"/>
<dbReference type="CPTAC" id="CPTAC-236"/>
<dbReference type="CPTAC" id="CPTAC-237"/>
<dbReference type="CPTAC" id="CPTAC-2752"/>
<dbReference type="jPOST" id="P40925"/>
<dbReference type="MassIVE" id="P40925"/>
<dbReference type="PaxDb" id="9606-ENSP00000438144"/>
<dbReference type="PeptideAtlas" id="P40925"/>
<dbReference type="ProteomicsDB" id="25276"/>
<dbReference type="ProteomicsDB" id="55384">
    <molecule id="P40925-1"/>
</dbReference>
<dbReference type="ProteomicsDB" id="55385">
    <molecule id="P40925-2"/>
</dbReference>
<dbReference type="Pumba" id="P40925"/>
<dbReference type="TopDownProteomics" id="P40925-1">
    <molecule id="P40925-1"/>
</dbReference>
<dbReference type="Antibodypedia" id="15986">
    <property type="antibodies" value="426 antibodies from 39 providers"/>
</dbReference>
<dbReference type="CPTC" id="P40925">
    <property type="antibodies" value="3 antibodies"/>
</dbReference>
<dbReference type="DNASU" id="4190"/>
<dbReference type="Ensembl" id="ENST00000233114.13">
    <molecule id="P40925-1"/>
    <property type="protein sequence ID" value="ENSP00000233114.8"/>
    <property type="gene ID" value="ENSG00000014641.21"/>
</dbReference>
<dbReference type="Ensembl" id="ENST00000432309.6">
    <molecule id="P40925-3"/>
    <property type="protein sequence ID" value="ENSP00000410073.2"/>
    <property type="gene ID" value="ENSG00000014641.21"/>
</dbReference>
<dbReference type="Ensembl" id="ENST00000544381.4">
    <molecule id="P40925-1"/>
    <property type="protein sequence ID" value="ENSP00000446395.2"/>
    <property type="gene ID" value="ENSG00000014641.21"/>
</dbReference>
<dbReference type="GeneID" id="4190"/>
<dbReference type="KEGG" id="hsa:4190"/>
<dbReference type="MANE-Select" id="ENST00000233114.13">
    <property type="protein sequence ID" value="ENSP00000233114.8"/>
    <property type="RefSeq nucleotide sequence ID" value="NM_005917.4"/>
    <property type="RefSeq protein sequence ID" value="NP_005908.1"/>
</dbReference>
<dbReference type="UCSC" id="uc010ypv.3">
    <molecule id="P40925-1"/>
    <property type="organism name" value="human"/>
</dbReference>
<dbReference type="AGR" id="HGNC:6970"/>
<dbReference type="CTD" id="4190"/>
<dbReference type="DisGeNET" id="4190"/>
<dbReference type="GeneCards" id="MDH1"/>
<dbReference type="HGNC" id="HGNC:6970">
    <property type="gene designation" value="MDH1"/>
</dbReference>
<dbReference type="HPA" id="ENSG00000014641">
    <property type="expression patterns" value="Tissue enhanced (heart muscle, tongue)"/>
</dbReference>
<dbReference type="MalaCards" id="MDH1"/>
<dbReference type="MIM" id="154200">
    <property type="type" value="gene"/>
</dbReference>
<dbReference type="MIM" id="618959">
    <property type="type" value="phenotype"/>
</dbReference>
<dbReference type="neXtProt" id="NX_P40925"/>
<dbReference type="OpenTargets" id="ENSG00000014641"/>
<dbReference type="PharmGKB" id="PA30714"/>
<dbReference type="VEuPathDB" id="HostDB:ENSG00000014641"/>
<dbReference type="eggNOG" id="KOG1496">
    <property type="taxonomic scope" value="Eukaryota"/>
</dbReference>
<dbReference type="GeneTree" id="ENSGT00530000063410"/>
<dbReference type="HOGENOM" id="CLU_040727_2_0_1"/>
<dbReference type="InParanoid" id="P40925"/>
<dbReference type="OMA" id="HTWVNGT"/>
<dbReference type="OrthoDB" id="4069699at2759"/>
<dbReference type="PAN-GO" id="P40925">
    <property type="GO annotations" value="6 GO annotations based on evolutionary models"/>
</dbReference>
<dbReference type="PhylomeDB" id="P40925"/>
<dbReference type="TreeFam" id="TF105826"/>
<dbReference type="BioCyc" id="MetaCyc:HS00361-MONOMER"/>
<dbReference type="BRENDA" id="1.1.1.37">
    <property type="organism ID" value="2681"/>
</dbReference>
<dbReference type="PathwayCommons" id="P40925"/>
<dbReference type="Reactome" id="R-HSA-9856872">
    <property type="pathway name" value="Malate-aspartate shuttle"/>
</dbReference>
<dbReference type="SABIO-RK" id="P40925"/>
<dbReference type="SignaLink" id="P40925"/>
<dbReference type="SIGNOR" id="P40925"/>
<dbReference type="BioGRID-ORCS" id="4190">
    <property type="hits" value="16 hits in 1166 CRISPR screens"/>
</dbReference>
<dbReference type="CD-CODE" id="FB4E32DD">
    <property type="entry name" value="Presynaptic clusters and postsynaptic densities"/>
</dbReference>
<dbReference type="ChiTaRS" id="MDH1">
    <property type="organism name" value="human"/>
</dbReference>
<dbReference type="GenomeRNAi" id="4190"/>
<dbReference type="Pharos" id="P40925">
    <property type="development level" value="Tchem"/>
</dbReference>
<dbReference type="PRO" id="PR:P40925"/>
<dbReference type="Proteomes" id="UP000005640">
    <property type="component" value="Chromosome 2"/>
</dbReference>
<dbReference type="RNAct" id="P40925">
    <property type="molecule type" value="protein"/>
</dbReference>
<dbReference type="Bgee" id="ENSG00000014641">
    <property type="expression patterns" value="Expressed in lateral nuclear group of thalamus and 214 other cell types or tissues"/>
</dbReference>
<dbReference type="ExpressionAtlas" id="P40925">
    <property type="expression patterns" value="baseline and differential"/>
</dbReference>
<dbReference type="GO" id="GO:0005813">
    <property type="term" value="C:centrosome"/>
    <property type="evidence" value="ECO:0000314"/>
    <property type="project" value="HPA"/>
</dbReference>
<dbReference type="GO" id="GO:0005737">
    <property type="term" value="C:cytoplasm"/>
    <property type="evidence" value="ECO:0000314"/>
    <property type="project" value="ComplexPortal"/>
</dbReference>
<dbReference type="GO" id="GO:0005829">
    <property type="term" value="C:cytosol"/>
    <property type="evidence" value="ECO:0000314"/>
    <property type="project" value="HPA"/>
</dbReference>
<dbReference type="GO" id="GO:0070062">
    <property type="term" value="C:extracellular exosome"/>
    <property type="evidence" value="ECO:0007005"/>
    <property type="project" value="UniProtKB"/>
</dbReference>
<dbReference type="GO" id="GO:0005615">
    <property type="term" value="C:extracellular space"/>
    <property type="evidence" value="ECO:0007005"/>
    <property type="project" value="UniProtKB"/>
</dbReference>
<dbReference type="GO" id="GO:0047860">
    <property type="term" value="F:diiodophenylpyruvate reductase activity"/>
    <property type="evidence" value="ECO:0007669"/>
    <property type="project" value="UniProtKB-EC"/>
</dbReference>
<dbReference type="GO" id="GO:0047995">
    <property type="term" value="F:hydroxyphenylpyruvate reductase activity"/>
    <property type="evidence" value="ECO:0007669"/>
    <property type="project" value="RHEA"/>
</dbReference>
<dbReference type="GO" id="GO:0030060">
    <property type="term" value="F:L-malate dehydrogenase (NAD+) activity"/>
    <property type="evidence" value="ECO:0000269"/>
    <property type="project" value="Reactome"/>
</dbReference>
<dbReference type="GO" id="GO:0004470">
    <property type="term" value="F:malic enzyme activity"/>
    <property type="evidence" value="ECO:0000304"/>
    <property type="project" value="ProtInc"/>
</dbReference>
<dbReference type="GO" id="GO:0006108">
    <property type="term" value="P:malate metabolic process"/>
    <property type="evidence" value="ECO:0000318"/>
    <property type="project" value="GO_Central"/>
</dbReference>
<dbReference type="GO" id="GO:0043490">
    <property type="term" value="P:malate-aspartate shuttle"/>
    <property type="evidence" value="ECO:0000315"/>
    <property type="project" value="FlyBase"/>
</dbReference>
<dbReference type="GO" id="GO:0006734">
    <property type="term" value="P:NADH metabolic process"/>
    <property type="evidence" value="ECO:0000314"/>
    <property type="project" value="ComplexPortal"/>
</dbReference>
<dbReference type="GO" id="GO:0006739">
    <property type="term" value="P:NADP metabolic process"/>
    <property type="evidence" value="ECO:0000314"/>
    <property type="project" value="ComplexPortal"/>
</dbReference>
<dbReference type="GO" id="GO:0006107">
    <property type="term" value="P:oxaloacetate metabolic process"/>
    <property type="evidence" value="ECO:0000318"/>
    <property type="project" value="GO_Central"/>
</dbReference>
<dbReference type="GO" id="GO:0006099">
    <property type="term" value="P:tricarboxylic acid cycle"/>
    <property type="evidence" value="ECO:0000318"/>
    <property type="project" value="GO_Central"/>
</dbReference>
<dbReference type="CDD" id="cd01336">
    <property type="entry name" value="MDH_cytoplasmic_cytosolic"/>
    <property type="match status" value="1"/>
</dbReference>
<dbReference type="FunFam" id="3.40.50.720:FF:000010">
    <property type="entry name" value="Malate dehydrogenase"/>
    <property type="match status" value="1"/>
</dbReference>
<dbReference type="FunFam" id="3.90.110.10:FF:000002">
    <property type="entry name" value="Malate dehydrogenase"/>
    <property type="match status" value="1"/>
</dbReference>
<dbReference type="Gene3D" id="3.90.110.10">
    <property type="entry name" value="Lactate dehydrogenase/glycoside hydrolase, family 4, C-terminal"/>
    <property type="match status" value="1"/>
</dbReference>
<dbReference type="Gene3D" id="3.40.50.720">
    <property type="entry name" value="NAD(P)-binding Rossmann-like Domain"/>
    <property type="match status" value="1"/>
</dbReference>
<dbReference type="HAMAP" id="MF_01517">
    <property type="entry name" value="Malate_dehydrog_2"/>
    <property type="match status" value="1"/>
</dbReference>
<dbReference type="InterPro" id="IPR001557">
    <property type="entry name" value="L-lactate/malate_DH"/>
</dbReference>
<dbReference type="InterPro" id="IPR022383">
    <property type="entry name" value="Lactate/malate_DH_C"/>
</dbReference>
<dbReference type="InterPro" id="IPR001236">
    <property type="entry name" value="Lactate/malate_DH_N"/>
</dbReference>
<dbReference type="InterPro" id="IPR015955">
    <property type="entry name" value="Lactate_DH/Glyco_Ohase_4_C"/>
</dbReference>
<dbReference type="InterPro" id="IPR001252">
    <property type="entry name" value="Malate_DH_AS"/>
</dbReference>
<dbReference type="InterPro" id="IPR011274">
    <property type="entry name" value="Malate_DH_NAD-dep_euk"/>
</dbReference>
<dbReference type="InterPro" id="IPR010945">
    <property type="entry name" value="Malate_DH_type2"/>
</dbReference>
<dbReference type="InterPro" id="IPR036291">
    <property type="entry name" value="NAD(P)-bd_dom_sf"/>
</dbReference>
<dbReference type="NCBIfam" id="TIGR01759">
    <property type="entry name" value="MalateDH-SF1"/>
    <property type="match status" value="1"/>
</dbReference>
<dbReference type="NCBIfam" id="TIGR01758">
    <property type="entry name" value="MDH_euk_cyt"/>
    <property type="match status" value="1"/>
</dbReference>
<dbReference type="NCBIfam" id="NF003916">
    <property type="entry name" value="PRK05442.1"/>
    <property type="match status" value="1"/>
</dbReference>
<dbReference type="PANTHER" id="PTHR23382">
    <property type="entry name" value="MALATE DEHYDROGENASE"/>
    <property type="match status" value="1"/>
</dbReference>
<dbReference type="Pfam" id="PF02866">
    <property type="entry name" value="Ldh_1_C"/>
    <property type="match status" value="1"/>
</dbReference>
<dbReference type="Pfam" id="PF00056">
    <property type="entry name" value="Ldh_1_N"/>
    <property type="match status" value="1"/>
</dbReference>
<dbReference type="PIRSF" id="PIRSF000102">
    <property type="entry name" value="Lac_mal_DH"/>
    <property type="match status" value="1"/>
</dbReference>
<dbReference type="SUPFAM" id="SSF56327">
    <property type="entry name" value="LDH C-terminal domain-like"/>
    <property type="match status" value="1"/>
</dbReference>
<dbReference type="SUPFAM" id="SSF51735">
    <property type="entry name" value="NAD(P)-binding Rossmann-fold domains"/>
    <property type="match status" value="1"/>
</dbReference>
<dbReference type="PROSITE" id="PS00068">
    <property type="entry name" value="MDH"/>
    <property type="match status" value="1"/>
</dbReference>
<reference key="1">
    <citation type="journal article" date="1996" name="Genomics">
        <title>Molecular cloning and mapping of a human cDNA for cytosolic malate dehydrogenase (MDH1).</title>
        <authorList>
            <person name="Tanaka T."/>
            <person name="Inazawa J."/>
            <person name="Nakamura Y."/>
        </authorList>
    </citation>
    <scope>NUCLEOTIDE SEQUENCE [MRNA] (ISOFORM 1)</scope>
    <scope>SUBCELLULAR LOCATION</scope>
    <source>
        <tissue>Heart</tissue>
    </source>
</reference>
<reference key="2">
    <citation type="submission" date="1998-05" db="EMBL/GenBank/DDBJ databases">
        <authorList>
            <person name="Lo A.S.Y."/>
            <person name="Waye M.M.Y."/>
        </authorList>
    </citation>
    <scope>NUCLEOTIDE SEQUENCE [MRNA] (ISOFORM 1)</scope>
    <source>
        <tissue>Heart</tissue>
    </source>
</reference>
<reference key="3">
    <citation type="submission" date="2004-06" db="EMBL/GenBank/DDBJ databases">
        <title>Cloning of human full open reading frames in Gateway(TM) system entry vector (pDONR201).</title>
        <authorList>
            <person name="Ebert L."/>
            <person name="Schick M."/>
            <person name="Neubert P."/>
            <person name="Schatten R."/>
            <person name="Henze S."/>
            <person name="Korn B."/>
        </authorList>
    </citation>
    <scope>NUCLEOTIDE SEQUENCE [LARGE SCALE MRNA] (ISOFORM 1)</scope>
</reference>
<reference key="4">
    <citation type="journal article" date="2004" name="Nat. Genet.">
        <title>Complete sequencing and characterization of 21,243 full-length human cDNAs.</title>
        <authorList>
            <person name="Ota T."/>
            <person name="Suzuki Y."/>
            <person name="Nishikawa T."/>
            <person name="Otsuki T."/>
            <person name="Sugiyama T."/>
            <person name="Irie R."/>
            <person name="Wakamatsu A."/>
            <person name="Hayashi K."/>
            <person name="Sato H."/>
            <person name="Nagai K."/>
            <person name="Kimura K."/>
            <person name="Makita H."/>
            <person name="Sekine M."/>
            <person name="Obayashi M."/>
            <person name="Nishi T."/>
            <person name="Shibahara T."/>
            <person name="Tanaka T."/>
            <person name="Ishii S."/>
            <person name="Yamamoto J."/>
            <person name="Saito K."/>
            <person name="Kawai Y."/>
            <person name="Isono Y."/>
            <person name="Nakamura Y."/>
            <person name="Nagahari K."/>
            <person name="Murakami K."/>
            <person name="Yasuda T."/>
            <person name="Iwayanagi T."/>
            <person name="Wagatsuma M."/>
            <person name="Shiratori A."/>
            <person name="Sudo H."/>
            <person name="Hosoiri T."/>
            <person name="Kaku Y."/>
            <person name="Kodaira H."/>
            <person name="Kondo H."/>
            <person name="Sugawara M."/>
            <person name="Takahashi M."/>
            <person name="Kanda K."/>
            <person name="Yokoi T."/>
            <person name="Furuya T."/>
            <person name="Kikkawa E."/>
            <person name="Omura Y."/>
            <person name="Abe K."/>
            <person name="Kamihara K."/>
            <person name="Katsuta N."/>
            <person name="Sato K."/>
            <person name="Tanikawa M."/>
            <person name="Yamazaki M."/>
            <person name="Ninomiya K."/>
            <person name="Ishibashi T."/>
            <person name="Yamashita H."/>
            <person name="Murakawa K."/>
            <person name="Fujimori K."/>
            <person name="Tanai H."/>
            <person name="Kimata M."/>
            <person name="Watanabe M."/>
            <person name="Hiraoka S."/>
            <person name="Chiba Y."/>
            <person name="Ishida S."/>
            <person name="Ono Y."/>
            <person name="Takiguchi S."/>
            <person name="Watanabe S."/>
            <person name="Yosida M."/>
            <person name="Hotuta T."/>
            <person name="Kusano J."/>
            <person name="Kanehori K."/>
            <person name="Takahashi-Fujii A."/>
            <person name="Hara H."/>
            <person name="Tanase T.-O."/>
            <person name="Nomura Y."/>
            <person name="Togiya S."/>
            <person name="Komai F."/>
            <person name="Hara R."/>
            <person name="Takeuchi K."/>
            <person name="Arita M."/>
            <person name="Imose N."/>
            <person name="Musashino K."/>
            <person name="Yuuki H."/>
            <person name="Oshima A."/>
            <person name="Sasaki N."/>
            <person name="Aotsuka S."/>
            <person name="Yoshikawa Y."/>
            <person name="Matsunawa H."/>
            <person name="Ichihara T."/>
            <person name="Shiohata N."/>
            <person name="Sano S."/>
            <person name="Moriya S."/>
            <person name="Momiyama H."/>
            <person name="Satoh N."/>
            <person name="Takami S."/>
            <person name="Terashima Y."/>
            <person name="Suzuki O."/>
            <person name="Nakagawa S."/>
            <person name="Senoh A."/>
            <person name="Mizoguchi H."/>
            <person name="Goto Y."/>
            <person name="Shimizu F."/>
            <person name="Wakebe H."/>
            <person name="Hishigaki H."/>
            <person name="Watanabe T."/>
            <person name="Sugiyama A."/>
            <person name="Takemoto M."/>
            <person name="Kawakami B."/>
            <person name="Yamazaki M."/>
            <person name="Watanabe K."/>
            <person name="Kumagai A."/>
            <person name="Itakura S."/>
            <person name="Fukuzumi Y."/>
            <person name="Fujimori Y."/>
            <person name="Komiyama M."/>
            <person name="Tashiro H."/>
            <person name="Tanigami A."/>
            <person name="Fujiwara T."/>
            <person name="Ono T."/>
            <person name="Yamada K."/>
            <person name="Fujii Y."/>
            <person name="Ozaki K."/>
            <person name="Hirao M."/>
            <person name="Ohmori Y."/>
            <person name="Kawabata A."/>
            <person name="Hikiji T."/>
            <person name="Kobatake N."/>
            <person name="Inagaki H."/>
            <person name="Ikema Y."/>
            <person name="Okamoto S."/>
            <person name="Okitani R."/>
            <person name="Kawakami T."/>
            <person name="Noguchi S."/>
            <person name="Itoh T."/>
            <person name="Shigeta K."/>
            <person name="Senba T."/>
            <person name="Matsumura K."/>
            <person name="Nakajima Y."/>
            <person name="Mizuno T."/>
            <person name="Morinaga M."/>
            <person name="Sasaki M."/>
            <person name="Togashi T."/>
            <person name="Oyama M."/>
            <person name="Hata H."/>
            <person name="Watanabe M."/>
            <person name="Komatsu T."/>
            <person name="Mizushima-Sugano J."/>
            <person name="Satoh T."/>
            <person name="Shirai Y."/>
            <person name="Takahashi Y."/>
            <person name="Nakagawa K."/>
            <person name="Okumura K."/>
            <person name="Nagase T."/>
            <person name="Nomura N."/>
            <person name="Kikuchi H."/>
            <person name="Masuho Y."/>
            <person name="Yamashita R."/>
            <person name="Nakai K."/>
            <person name="Yada T."/>
            <person name="Nakamura Y."/>
            <person name="Ohara O."/>
            <person name="Isogai T."/>
            <person name="Sugano S."/>
        </authorList>
    </citation>
    <scope>NUCLEOTIDE SEQUENCE [LARGE SCALE MRNA] (ISOFORMS 1; 2 AND 3)</scope>
    <source>
        <tissue>Cerebellum</tissue>
        <tissue>Substantia nigra</tissue>
    </source>
</reference>
<reference key="5">
    <citation type="journal article" date="2005" name="Nature">
        <title>Generation and annotation of the DNA sequences of human chromosomes 2 and 4.</title>
        <authorList>
            <person name="Hillier L.W."/>
            <person name="Graves T.A."/>
            <person name="Fulton R.S."/>
            <person name="Fulton L.A."/>
            <person name="Pepin K.H."/>
            <person name="Minx P."/>
            <person name="Wagner-McPherson C."/>
            <person name="Layman D."/>
            <person name="Wylie K."/>
            <person name="Sekhon M."/>
            <person name="Becker M.C."/>
            <person name="Fewell G.A."/>
            <person name="Delehaunty K.D."/>
            <person name="Miner T.L."/>
            <person name="Nash W.E."/>
            <person name="Kremitzki C."/>
            <person name="Oddy L."/>
            <person name="Du H."/>
            <person name="Sun H."/>
            <person name="Bradshaw-Cordum H."/>
            <person name="Ali J."/>
            <person name="Carter J."/>
            <person name="Cordes M."/>
            <person name="Harris A."/>
            <person name="Isak A."/>
            <person name="van Brunt A."/>
            <person name="Nguyen C."/>
            <person name="Du F."/>
            <person name="Courtney L."/>
            <person name="Kalicki J."/>
            <person name="Ozersky P."/>
            <person name="Abbott S."/>
            <person name="Armstrong J."/>
            <person name="Belter E.A."/>
            <person name="Caruso L."/>
            <person name="Cedroni M."/>
            <person name="Cotton M."/>
            <person name="Davidson T."/>
            <person name="Desai A."/>
            <person name="Elliott G."/>
            <person name="Erb T."/>
            <person name="Fronick C."/>
            <person name="Gaige T."/>
            <person name="Haakenson W."/>
            <person name="Haglund K."/>
            <person name="Holmes A."/>
            <person name="Harkins R."/>
            <person name="Kim K."/>
            <person name="Kruchowski S.S."/>
            <person name="Strong C.M."/>
            <person name="Grewal N."/>
            <person name="Goyea E."/>
            <person name="Hou S."/>
            <person name="Levy A."/>
            <person name="Martinka S."/>
            <person name="Mead K."/>
            <person name="McLellan M.D."/>
            <person name="Meyer R."/>
            <person name="Randall-Maher J."/>
            <person name="Tomlinson C."/>
            <person name="Dauphin-Kohlberg S."/>
            <person name="Kozlowicz-Reilly A."/>
            <person name="Shah N."/>
            <person name="Swearengen-Shahid S."/>
            <person name="Snider J."/>
            <person name="Strong J.T."/>
            <person name="Thompson J."/>
            <person name="Yoakum M."/>
            <person name="Leonard S."/>
            <person name="Pearman C."/>
            <person name="Trani L."/>
            <person name="Radionenko M."/>
            <person name="Waligorski J.E."/>
            <person name="Wang C."/>
            <person name="Rock S.M."/>
            <person name="Tin-Wollam A.-M."/>
            <person name="Maupin R."/>
            <person name="Latreille P."/>
            <person name="Wendl M.C."/>
            <person name="Yang S.-P."/>
            <person name="Pohl C."/>
            <person name="Wallis J.W."/>
            <person name="Spieth J."/>
            <person name="Bieri T.A."/>
            <person name="Berkowicz N."/>
            <person name="Nelson J.O."/>
            <person name="Osborne J."/>
            <person name="Ding L."/>
            <person name="Meyer R."/>
            <person name="Sabo A."/>
            <person name="Shotland Y."/>
            <person name="Sinha P."/>
            <person name="Wohldmann P.E."/>
            <person name="Cook L.L."/>
            <person name="Hickenbotham M.T."/>
            <person name="Eldred J."/>
            <person name="Williams D."/>
            <person name="Jones T.A."/>
            <person name="She X."/>
            <person name="Ciccarelli F.D."/>
            <person name="Izaurralde E."/>
            <person name="Taylor J."/>
            <person name="Schmutz J."/>
            <person name="Myers R.M."/>
            <person name="Cox D.R."/>
            <person name="Huang X."/>
            <person name="McPherson J.D."/>
            <person name="Mardis E.R."/>
            <person name="Clifton S.W."/>
            <person name="Warren W.C."/>
            <person name="Chinwalla A.T."/>
            <person name="Eddy S.R."/>
            <person name="Marra M.A."/>
            <person name="Ovcharenko I."/>
            <person name="Furey T.S."/>
            <person name="Miller W."/>
            <person name="Eichler E.E."/>
            <person name="Bork P."/>
            <person name="Suyama M."/>
            <person name="Torrents D."/>
            <person name="Waterston R.H."/>
            <person name="Wilson R.K."/>
        </authorList>
    </citation>
    <scope>NUCLEOTIDE SEQUENCE [LARGE SCALE GENOMIC DNA]</scope>
</reference>
<reference key="6">
    <citation type="submission" date="2005-09" db="EMBL/GenBank/DDBJ databases">
        <authorList>
            <person name="Mural R.J."/>
            <person name="Istrail S."/>
            <person name="Sutton G.G."/>
            <person name="Florea L."/>
            <person name="Halpern A.L."/>
            <person name="Mobarry C.M."/>
            <person name="Lippert R."/>
            <person name="Walenz B."/>
            <person name="Shatkay H."/>
            <person name="Dew I."/>
            <person name="Miller J.R."/>
            <person name="Flanigan M.J."/>
            <person name="Edwards N.J."/>
            <person name="Bolanos R."/>
            <person name="Fasulo D."/>
            <person name="Halldorsson B.V."/>
            <person name="Hannenhalli S."/>
            <person name="Turner R."/>
            <person name="Yooseph S."/>
            <person name="Lu F."/>
            <person name="Nusskern D.R."/>
            <person name="Shue B.C."/>
            <person name="Zheng X.H."/>
            <person name="Zhong F."/>
            <person name="Delcher A.L."/>
            <person name="Huson D.H."/>
            <person name="Kravitz S.A."/>
            <person name="Mouchard L."/>
            <person name="Reinert K."/>
            <person name="Remington K.A."/>
            <person name="Clark A.G."/>
            <person name="Waterman M.S."/>
            <person name="Eichler E.E."/>
            <person name="Adams M.D."/>
            <person name="Hunkapiller M.W."/>
            <person name="Myers E.W."/>
            <person name="Venter J.C."/>
        </authorList>
    </citation>
    <scope>NUCLEOTIDE SEQUENCE [LARGE SCALE GENOMIC DNA]</scope>
</reference>
<reference key="7">
    <citation type="journal article" date="2004" name="Genome Res.">
        <title>The status, quality, and expansion of the NIH full-length cDNA project: the Mammalian Gene Collection (MGC).</title>
        <authorList>
            <consortium name="The MGC Project Team"/>
        </authorList>
    </citation>
    <scope>NUCLEOTIDE SEQUENCE [LARGE SCALE MRNA] (ISOFORM 1)</scope>
    <source>
        <tissue>Placenta</tissue>
    </source>
</reference>
<reference key="8">
    <citation type="submission" date="2006-05" db="UniProtKB">
        <authorList>
            <person name="Bienvenut W.V."/>
            <person name="Kanor S."/>
            <person name="Tissot J.-D."/>
            <person name="Quadroni M."/>
        </authorList>
    </citation>
    <scope>PROTEIN SEQUENCE OF 2-18; 205-213 AND 324-334</scope>
    <scope>CLEAVAGE OF INITIATOR METHIONINE</scope>
    <scope>ACETYLATION AT SER-2</scope>
    <scope>IDENTIFICATION BY MASS SPECTROMETRY</scope>
    <source>
        <tissue>T-cell</tissue>
    </source>
</reference>
<reference key="9">
    <citation type="journal article" date="1994" name="Electrophoresis">
        <title>The human myocardial two-dimensional gel protein database: update 1994.</title>
        <authorList>
            <person name="Corbett J.M."/>
            <person name="Wheeler C.H."/>
            <person name="Baker C.S."/>
            <person name="Yacoub M.H."/>
            <person name="Dunn M.J."/>
        </authorList>
    </citation>
    <scope>PROTEIN SEQUENCE OF 168-181</scope>
    <source>
        <tissue>Heart</tissue>
    </source>
</reference>
<reference key="10">
    <citation type="submission" date="2007-03" db="UniProtKB">
        <authorList>
            <person name="Lubec G."/>
            <person name="Vishwanath V."/>
        </authorList>
    </citation>
    <scope>PROTEIN SEQUENCE OF 180-201 AND 299-310</scope>
    <scope>IDENTIFICATION BY MASS SPECTROMETRY</scope>
    <source>
        <tissue>Brain</tissue>
        <tissue>Cajal-Retzius cell</tissue>
    </source>
</reference>
<reference key="11">
    <citation type="journal article" date="1987" name="Biochem. Genet.">
        <title>The reduction of aromatic alpha-keto acids by cytoplasmic malate dehydrogenase and lactate dehydrogenase.</title>
        <authorList>
            <person name="Friedrich C.A."/>
            <person name="Morizot D.C."/>
            <person name="Siciliano M.J."/>
            <person name="Ferrell R.E."/>
        </authorList>
    </citation>
    <scope>FUNCTION</scope>
    <scope>CATALYTIC ACTIVITY</scope>
</reference>
<reference key="12">
    <citation type="journal article" date="1988" name="Ann. Hum. Genet.">
        <title>Biochemical and genetic identity of alpha-keto acid reductase and cytoplasmic malate dehydrogenase from human erythrocytes.</title>
        <authorList>
            <person name="Friedrich C.A."/>
            <person name="Ferrell R.E."/>
            <person name="Siciliano M.J."/>
            <person name="Kitto G.B."/>
        </authorList>
    </citation>
    <scope>CATALYTIC ACTIVITY</scope>
    <scope>FUNCTION</scope>
</reference>
<reference key="13">
    <citation type="journal article" date="2005" name="Biochem. Biophys. Res. Commun.">
        <title>Proteomic identification of proteins conjugated to ISG15 in mouse and human cells.</title>
        <authorList>
            <person name="Giannakopoulos N.V."/>
            <person name="Luo J.K."/>
            <person name="Papov V."/>
            <person name="Zou W."/>
            <person name="Lenschow D.J."/>
            <person name="Jacobs B.S."/>
            <person name="Borden E.C."/>
            <person name="Li J."/>
            <person name="Virgin H.W."/>
            <person name="Zhang D.E."/>
        </authorList>
    </citation>
    <scope>ISGYLATION</scope>
</reference>
<reference key="14">
    <citation type="journal article" date="2009" name="Science">
        <title>Lysine acetylation targets protein complexes and co-regulates major cellular functions.</title>
        <authorList>
            <person name="Choudhary C."/>
            <person name="Kumar C."/>
            <person name="Gnad F."/>
            <person name="Nielsen M.L."/>
            <person name="Rehman M."/>
            <person name="Walther T.C."/>
            <person name="Olsen J.V."/>
            <person name="Mann M."/>
        </authorList>
    </citation>
    <scope>ACETYLATION [LARGE SCALE ANALYSIS] AT LYS-118 AND LYS-298</scope>
    <scope>IDENTIFICATION BY MASS SPECTROMETRY [LARGE SCALE ANALYSIS]</scope>
</reference>
<reference key="15">
    <citation type="journal article" date="2010" name="Sci. Signal.">
        <title>Quantitative phosphoproteomics reveals widespread full phosphorylation site occupancy during mitosis.</title>
        <authorList>
            <person name="Olsen J.V."/>
            <person name="Vermeulen M."/>
            <person name="Santamaria A."/>
            <person name="Kumar C."/>
            <person name="Miller M.L."/>
            <person name="Jensen L.J."/>
            <person name="Gnad F."/>
            <person name="Cox J."/>
            <person name="Jensen T.S."/>
            <person name="Nigg E.A."/>
            <person name="Brunak S."/>
            <person name="Mann M."/>
        </authorList>
    </citation>
    <scope>PHOSPHORYLATION [LARGE SCALE ANALYSIS] AT SER-333</scope>
    <scope>IDENTIFICATION BY MASS SPECTROMETRY [LARGE SCALE ANALYSIS]</scope>
    <source>
        <tissue>Cervix carcinoma</tissue>
    </source>
</reference>
<reference key="16">
    <citation type="journal article" date="2011" name="BMC Syst. Biol.">
        <title>Initial characterization of the human central proteome.</title>
        <authorList>
            <person name="Burkard T.R."/>
            <person name="Planyavsky M."/>
            <person name="Kaupe I."/>
            <person name="Breitwieser F.P."/>
            <person name="Buerckstuemmer T."/>
            <person name="Bennett K.L."/>
            <person name="Superti-Furga G."/>
            <person name="Colinge J."/>
        </authorList>
    </citation>
    <scope>IDENTIFICATION BY MASS SPECTROMETRY [LARGE SCALE ANALYSIS]</scope>
</reference>
<reference key="17">
    <citation type="journal article" date="2012" name="J. Lipid Res.">
        <title>Acetylation of malate dehydrogenase 1 promotes adipogenic differentiation via activating its enzymatic activity.</title>
        <authorList>
            <person name="Kim E.Y."/>
            <person name="Kim W.K."/>
            <person name="Kang H.J."/>
            <person name="Kim J.H."/>
            <person name="Chung S.J."/>
            <person name="Seo Y.S."/>
            <person name="Park S.G."/>
            <person name="Lee S.C."/>
            <person name="Bae K.H."/>
        </authorList>
    </citation>
    <scope>ACETYLATION AT LYS-118; LYS-121 AND LYS-298</scope>
</reference>
<reference key="18">
    <citation type="journal article" date="2012" name="J. Proteome Res.">
        <title>Resveratrol-induced changes of the human adipocyte secretion profile.</title>
        <authorList>
            <person name="Rosenow A."/>
            <person name="Noben J.P."/>
            <person name="Jocken J."/>
            <person name="Kallendrusch S."/>
            <person name="Fischer-Posovszky P."/>
            <person name="Mariman E.C."/>
            <person name="Renes J."/>
        </authorList>
    </citation>
    <scope>IDENTIFICATION BY MASS SPECTROMETRY [LARGE SCALE ANALYSIS]</scope>
</reference>
<reference key="19">
    <citation type="journal article" date="2014" name="J. Proteomics">
        <title>An enzyme assisted RP-RPLC approach for in-depth analysis of human liver phosphoproteome.</title>
        <authorList>
            <person name="Bian Y."/>
            <person name="Song C."/>
            <person name="Cheng K."/>
            <person name="Dong M."/>
            <person name="Wang F."/>
            <person name="Huang J."/>
            <person name="Sun D."/>
            <person name="Wang L."/>
            <person name="Ye M."/>
            <person name="Zou H."/>
        </authorList>
    </citation>
    <scope>PHOSPHORYLATION [LARGE SCALE ANALYSIS] AT SER-241</scope>
    <scope>IDENTIFICATION BY MASS SPECTROMETRY [LARGE SCALE ANALYSIS]</scope>
    <source>
        <tissue>Liver</tissue>
    </source>
</reference>
<reference key="20">
    <citation type="journal article" date="2015" name="Proteomics">
        <title>N-terminome analysis of the human mitochondrial proteome.</title>
        <authorList>
            <person name="Vaca Jacome A.S."/>
            <person name="Rabilloud T."/>
            <person name="Schaeffer-Reiss C."/>
            <person name="Rompais M."/>
            <person name="Ayoub D."/>
            <person name="Lane L."/>
            <person name="Bairoch A."/>
            <person name="Van Dorsselaer A."/>
            <person name="Carapito C."/>
        </authorList>
    </citation>
    <scope>ACETYLATION [LARGE SCALE ANALYSIS] AT SER-2</scope>
    <scope>CLEAVAGE OF INITIATOR METHIONINE [LARGE SCALE ANALYSIS]</scope>
    <scope>IDENTIFICATION BY MASS SPECTROMETRY [LARGE SCALE ANALYSIS]</scope>
</reference>
<reference key="21">
    <citation type="journal article" date="2019" name="Hum. Genet.">
        <title>MDH1 deficiency is a metabolic disorder of the malate-aspartate shuttle associated with early onset severe encephalopathy.</title>
        <authorList>
            <person name="Broeks M.H."/>
            <person name="Shamseldin H.E."/>
            <person name="Alhashem A."/>
            <person name="Hashem M."/>
            <person name="Abdulwahab F."/>
            <person name="Alshedi T."/>
            <person name="Alobaid I."/>
            <person name="Zwartkruis F."/>
            <person name="Westland D."/>
            <person name="Fuchs S."/>
            <person name="Verhoeven-Duif N.M."/>
            <person name="Jans J.J.M."/>
            <person name="Alkuraya F.S."/>
        </authorList>
    </citation>
    <scope>INVOLVEMENT IN DEE88</scope>
    <scope>VARIANT DEE88 VAL-120</scope>
    <scope>FUNCTION</scope>
    <scope>CHARACTERIZATIONC OF VARIANT DEE88 VAL-120</scope>
</reference>
<reference key="22">
    <citation type="journal article" date="2021" name="Cell Res.">
        <title>The metabolite alpha-KG induces GSDMC-dependent pyroptosis through death receptor 6-activated caspase-8.</title>
        <authorList>
            <person name="Zhang J.Y."/>
            <person name="Zhou B."/>
            <person name="Sun R.Y."/>
            <person name="Ai Y.L."/>
            <person name="Cheng K."/>
            <person name="Li F.N."/>
            <person name="Wang B.R."/>
            <person name="Liu F.J."/>
            <person name="Jiang Z.H."/>
            <person name="Wang W.J."/>
            <person name="Zhou D."/>
            <person name="Chen H.Z."/>
            <person name="Wu Q."/>
        </authorList>
    </citation>
    <scope>FUNCTION</scope>
    <scope>CATALYTIC ACTIVITY</scope>
</reference>
<sequence length="334" mass="36426">MSEPIRVLVTGAAGQIAYSLLYSIGNGSVFGKDQPIILVLLDITPMMGVLDGVLMELQDCALPLLKDVIATDKEDVAFKDLDVAILVGSMPRREGMERKDLLKANVKIFKSQGAALDKYAKKSVKVIVVGNPANTNCLTASKSAPSIPKENFSCLTRLDHNRAKAQIALKLGVTANDVKNVIIWGNHSSTQYPDVNHAKVKLQGKEVGVYEALKDDSWLKGEFVTTVQQRGAAVIKARKLSSAMSAAKAICDHVRDIWFGTPEGEFVSMGVISDGNSYGVPDDLLYSFPVVIKNKTWKFVEGLPINDFSREKMDLTAKELTEEKESAFEFLSSA</sequence>
<protein>
    <recommendedName>
        <fullName evidence="13">Malate dehydrogenase, cytoplasmic</fullName>
        <ecNumber evidence="7">1.1.1.37</ecNumber>
    </recommendedName>
    <alternativeName>
        <fullName evidence="13">Aromatic alpha-keto acid reductase</fullName>
        <shortName evidence="13">KAR</shortName>
        <ecNumber evidence="7">1.1.1.96</ecNumber>
    </alternativeName>
    <alternativeName>
        <fullName>Cytosolic malate dehydrogenase</fullName>
    </alternativeName>
</protein>
<proteinExistence type="evidence at protein level"/>
<evidence type="ECO:0000250" key="1">
    <source>
        <dbReference type="UniProtKB" id="O88989"/>
    </source>
</evidence>
<evidence type="ECO:0000250" key="2">
    <source>
        <dbReference type="UniProtKB" id="P11708"/>
    </source>
</evidence>
<evidence type="ECO:0000250" key="3">
    <source>
        <dbReference type="UniProtKB" id="P14152"/>
    </source>
</evidence>
<evidence type="ECO:0000269" key="4">
    <source>
    </source>
</evidence>
<evidence type="ECO:0000269" key="5">
    <source>
    </source>
</evidence>
<evidence type="ECO:0000269" key="6">
    <source>
    </source>
</evidence>
<evidence type="ECO:0000269" key="7">
    <source>
    </source>
</evidence>
<evidence type="ECO:0000269" key="8">
    <source>
    </source>
</evidence>
<evidence type="ECO:0000269" key="9">
    <source>
    </source>
</evidence>
<evidence type="ECO:0000269" key="10">
    <source ref="8"/>
</evidence>
<evidence type="ECO:0000303" key="11">
    <source>
    </source>
</evidence>
<evidence type="ECO:0000303" key="12">
    <source>
    </source>
</evidence>
<evidence type="ECO:0000305" key="13"/>
<evidence type="ECO:0000305" key="14">
    <source>
    </source>
</evidence>
<evidence type="ECO:0000312" key="15">
    <source>
        <dbReference type="HGNC" id="HGNC:6970"/>
    </source>
</evidence>
<evidence type="ECO:0007744" key="16">
    <source>
    </source>
</evidence>
<evidence type="ECO:0007744" key="17">
    <source>
    </source>
</evidence>
<evidence type="ECO:0007744" key="18">
    <source>
    </source>
</evidence>
<evidence type="ECO:0007744" key="19">
    <source>
    </source>
</evidence>
<evidence type="ECO:0007829" key="20">
    <source>
        <dbReference type="PDB" id="7RM9"/>
    </source>
</evidence>
<accession>P40925</accession>
<accession>B2R5V5</accession>
<accession>B4DUN2</accession>
<accession>B7Z3I7</accession>
<accession>F5H098</accession>
<accession>Q6I9V0</accession>
<name>MDHC_HUMAN</name>
<comment type="function">
    <text evidence="6 7 8">Catalyzes the reduction of aromatic alpha-keto acids in the presence of NADH (PubMed:2449162, PubMed:3052244). Plays essential roles in the malate-aspartate shuttle and the tricarboxylic acid cycle, important in mitochondrial NADH supply for oxidative phosphorylation (PubMed:31538237). Catalyzes the reduction of 2-oxoglutarate to 2-hydroxyglutarate, leading to elevated reactive oxygen species (ROS) (PubMed:34012073).</text>
</comment>
<comment type="catalytic activity">
    <reaction evidence="6 7">
        <text>(S)-malate + NAD(+) = oxaloacetate + NADH + H(+)</text>
        <dbReference type="Rhea" id="RHEA:21432"/>
        <dbReference type="ChEBI" id="CHEBI:15378"/>
        <dbReference type="ChEBI" id="CHEBI:15589"/>
        <dbReference type="ChEBI" id="CHEBI:16452"/>
        <dbReference type="ChEBI" id="CHEBI:57540"/>
        <dbReference type="ChEBI" id="CHEBI:57945"/>
        <dbReference type="EC" id="1.1.1.37"/>
    </reaction>
    <physiologicalReaction direction="left-to-right" evidence="6 7">
        <dbReference type="Rhea" id="RHEA:21433"/>
    </physiologicalReaction>
    <physiologicalReaction direction="right-to-left" evidence="6 7">
        <dbReference type="Rhea" id="RHEA:21434"/>
    </physiologicalReaction>
</comment>
<comment type="catalytic activity">
    <reaction evidence="6 7">
        <text>(2R)-2-hydroxy-3-(4-hydroxyphenyl)propanoate + NAD(+) = 3-(4-hydroxyphenyl)pyruvate + NADH + H(+)</text>
        <dbReference type="Rhea" id="RHEA:10780"/>
        <dbReference type="ChEBI" id="CHEBI:10980"/>
        <dbReference type="ChEBI" id="CHEBI:15378"/>
        <dbReference type="ChEBI" id="CHEBI:36242"/>
        <dbReference type="ChEBI" id="CHEBI:57540"/>
        <dbReference type="ChEBI" id="CHEBI:57945"/>
        <dbReference type="EC" id="1.1.1.96"/>
    </reaction>
    <physiologicalReaction direction="right-to-left" evidence="6 7">
        <dbReference type="Rhea" id="RHEA:10782"/>
    </physiologicalReaction>
</comment>
<comment type="catalytic activity">
    <reaction evidence="9">
        <text>(S)-2-hydroxyglutarate + NAD(+) = 2-oxoglutarate + NADH + H(+)</text>
        <dbReference type="Rhea" id="RHEA:57172"/>
        <dbReference type="ChEBI" id="CHEBI:15378"/>
        <dbReference type="ChEBI" id="CHEBI:16782"/>
        <dbReference type="ChEBI" id="CHEBI:16810"/>
        <dbReference type="ChEBI" id="CHEBI:57540"/>
        <dbReference type="ChEBI" id="CHEBI:57945"/>
    </reaction>
    <physiologicalReaction direction="right-to-left" evidence="9">
        <dbReference type="Rhea" id="RHEA:57174"/>
    </physiologicalReaction>
</comment>
<comment type="subunit">
    <text evidence="2">Homodimer.</text>
</comment>
<comment type="interaction">
    <interactant intactId="EBI-709625">
        <id>P40925</id>
    </interactant>
    <interactant intactId="EBI-710997">
        <id>P54274</id>
        <label>TERF1</label>
    </interactant>
    <organismsDiffer>false</organismsDiffer>
    <experiments>2</experiments>
</comment>
<comment type="subcellular location">
    <subcellularLocation>
        <location evidence="14">Cytoplasm</location>
        <location evidence="14">Cytosol</location>
    </subcellularLocation>
</comment>
<comment type="alternative products">
    <event type="alternative splicing"/>
    <isoform>
        <id>P40925-1</id>
        <name>1</name>
        <sequence type="displayed"/>
    </isoform>
    <isoform>
        <id>P40925-2</id>
        <name>2</name>
        <sequence type="described" ref="VSP_042661"/>
    </isoform>
    <isoform>
        <id>P40925-3</id>
        <name>3</name>
        <sequence type="described" ref="VSP_045847"/>
    </isoform>
</comment>
<comment type="PTM">
    <text evidence="4">ISGylated.</text>
</comment>
<comment type="PTM">
    <text evidence="5 10">Acetylation at Lys-118 dramatically enhances enzymatic activity and promotes adipogenic differentiation.</text>
</comment>
<comment type="disease" evidence="8">
    <disease id="DI-05883">
        <name>Developmental and epileptic encephalopathy 88</name>
        <acronym>DEE88</acronym>
        <description>A form of epileptic encephalopathy, a heterogeneous group of early-onset epilepsies characterized by refractory seizures, neurodevelopmental impairment, and poor prognosis. Development is normal prior to seizure onset, after which cognitive and motor delays become apparent. DEE88 is an autosomal recessive severe form characterized by global developmental delay, epilepsy, and progressive microcephaly.</description>
        <dbReference type="MIM" id="618959"/>
    </disease>
    <text>The disease is caused by variants affecting the gene represented in this entry.</text>
</comment>
<comment type="similarity">
    <text evidence="13">Belongs to the LDH/MDH superfamily. MDH type 2 family.</text>
</comment>
<comment type="online information" name="Wikipedia">
    <link uri="https://en.wikipedia.org/wiki/Malate_dehydrogenase"/>
    <text>Malate dehydrogenase entry</text>
</comment>
<feature type="initiator methionine" description="Removed" evidence="10 19">
    <location>
        <position position="1"/>
    </location>
</feature>
<feature type="chain" id="PRO_0000113409" description="Malate dehydrogenase, cytoplasmic">
    <location>
        <begin position="2"/>
        <end position="334"/>
    </location>
</feature>
<feature type="active site" description="Proton acceptor" evidence="2">
    <location>
        <position position="187"/>
    </location>
</feature>
<feature type="binding site" evidence="2">
    <location>
        <begin position="11"/>
        <end position="17"/>
    </location>
    <ligand>
        <name>NAD(+)</name>
        <dbReference type="ChEBI" id="CHEBI:57540"/>
    </ligand>
</feature>
<feature type="binding site" evidence="2">
    <location>
        <position position="42"/>
    </location>
    <ligand>
        <name>NAD(+)</name>
        <dbReference type="ChEBI" id="CHEBI:57540"/>
    </ligand>
</feature>
<feature type="binding site" evidence="2">
    <location>
        <position position="92"/>
    </location>
    <ligand>
        <name>substrate</name>
    </ligand>
</feature>
<feature type="binding site" evidence="2">
    <location>
        <position position="98"/>
    </location>
    <ligand>
        <name>substrate</name>
    </ligand>
</feature>
<feature type="binding site" evidence="2">
    <location>
        <position position="105"/>
    </location>
    <ligand>
        <name>NAD(+)</name>
        <dbReference type="ChEBI" id="CHEBI:57540"/>
    </ligand>
</feature>
<feature type="binding site" evidence="2">
    <location>
        <position position="112"/>
    </location>
    <ligand>
        <name>NAD(+)</name>
        <dbReference type="ChEBI" id="CHEBI:57540"/>
    </ligand>
</feature>
<feature type="binding site" evidence="2">
    <location>
        <begin position="129"/>
        <end position="131"/>
    </location>
    <ligand>
        <name>NAD(+)</name>
        <dbReference type="ChEBI" id="CHEBI:57540"/>
    </ligand>
</feature>
<feature type="binding site" evidence="2">
    <location>
        <position position="131"/>
    </location>
    <ligand>
        <name>substrate</name>
    </ligand>
</feature>
<feature type="binding site">
    <location>
        <position position="162"/>
    </location>
    <ligand>
        <name>substrate</name>
    </ligand>
</feature>
<feature type="modified residue" description="N-acetylserine" evidence="10 19">
    <location>
        <position position="2"/>
    </location>
</feature>
<feature type="modified residue" description="N6-succinyllysine" evidence="3">
    <location>
        <position position="110"/>
    </location>
</feature>
<feature type="modified residue" description="N6-acetyllysine" evidence="5 16">
    <location>
        <position position="118"/>
    </location>
</feature>
<feature type="modified residue" description="N6-acetyllysine" evidence="5">
    <location>
        <position position="121"/>
    </location>
</feature>
<feature type="modified residue" description="N6-succinyllysine" evidence="3">
    <location>
        <position position="214"/>
    </location>
</feature>
<feature type="modified residue" description="Phosphoserine" evidence="3">
    <location>
        <position position="217"/>
    </location>
</feature>
<feature type="modified residue" description="Omega-N-methylarginine" evidence="3">
    <location>
        <position position="230"/>
    </location>
</feature>
<feature type="modified residue" description="Phosphoserine" evidence="18">
    <location>
        <position position="241"/>
    </location>
</feature>
<feature type="modified residue" description="N6-acetyllysine; alternate" evidence="5 16">
    <location>
        <position position="298"/>
    </location>
</feature>
<feature type="modified residue" description="N6-succinyllysine; alternate" evidence="3">
    <location>
        <position position="298"/>
    </location>
</feature>
<feature type="modified residue" description="Phosphoserine" evidence="3">
    <location>
        <position position="309"/>
    </location>
</feature>
<feature type="modified residue" description="N6-succinyllysine" evidence="3">
    <location>
        <position position="318"/>
    </location>
</feature>
<feature type="modified residue" description="Phosphoserine" evidence="1">
    <location>
        <position position="332"/>
    </location>
</feature>
<feature type="modified residue" description="Phosphoserine" evidence="17">
    <location>
        <position position="333"/>
    </location>
</feature>
<feature type="splice variant" id="VSP_042661" description="In isoform 2." evidence="11">
    <location>
        <begin position="1"/>
        <end position="89"/>
    </location>
</feature>
<feature type="splice variant" id="VSP_045847" description="In isoform 3." evidence="11">
    <original>M</original>
    <variation>MRRCSYFPKDVTVFDKDDK</variation>
    <location>
        <position position="1"/>
    </location>
</feature>
<feature type="sequence variant" id="VAR_083894" description="In DEE88; decreased protein expression; increased levels of glutamate and glycerol-3-phosphate." evidence="8">
    <original>A</original>
    <variation>V</variation>
    <location>
        <position position="120"/>
    </location>
</feature>
<feature type="sequence conflict" description="In Ref. 4; BAH12223." evidence="13" ref="4">
    <original>Q</original>
    <variation>R</variation>
    <location>
        <position position="15"/>
    </location>
</feature>
<feature type="strand" evidence="20">
    <location>
        <begin position="5"/>
        <end position="11"/>
    </location>
</feature>
<feature type="helix" evidence="20">
    <location>
        <begin position="15"/>
        <end position="25"/>
    </location>
</feature>
<feature type="turn" evidence="20">
    <location>
        <begin position="26"/>
        <end position="30"/>
    </location>
</feature>
<feature type="strand" evidence="20">
    <location>
        <begin position="36"/>
        <end position="41"/>
    </location>
</feature>
<feature type="helix" evidence="20">
    <location>
        <begin position="44"/>
        <end position="46"/>
    </location>
</feature>
<feature type="helix" evidence="20">
    <location>
        <begin position="47"/>
        <end position="59"/>
    </location>
</feature>
<feature type="strand" evidence="20">
    <location>
        <begin position="65"/>
        <end position="72"/>
    </location>
</feature>
<feature type="helix" evidence="20">
    <location>
        <begin position="74"/>
        <end position="77"/>
    </location>
</feature>
<feature type="turn" evidence="20">
    <location>
        <begin position="78"/>
        <end position="80"/>
    </location>
</feature>
<feature type="strand" evidence="20">
    <location>
        <begin position="82"/>
        <end position="86"/>
    </location>
</feature>
<feature type="helix" evidence="20">
    <location>
        <begin position="98"/>
        <end position="101"/>
    </location>
</feature>
<feature type="helix" evidence="20">
    <location>
        <begin position="102"/>
        <end position="119"/>
    </location>
</feature>
<feature type="strand" evidence="20">
    <location>
        <begin position="125"/>
        <end position="128"/>
    </location>
</feature>
<feature type="strand" evidence="20">
    <location>
        <begin position="130"/>
        <end position="132"/>
    </location>
</feature>
<feature type="helix" evidence="20">
    <location>
        <begin position="133"/>
        <end position="142"/>
    </location>
</feature>
<feature type="helix" evidence="20">
    <location>
        <begin position="149"/>
        <end position="151"/>
    </location>
</feature>
<feature type="strand" evidence="20">
    <location>
        <begin position="152"/>
        <end position="154"/>
    </location>
</feature>
<feature type="helix" evidence="20">
    <location>
        <begin position="157"/>
        <end position="171"/>
    </location>
</feature>
<feature type="helix" evidence="20">
    <location>
        <begin position="175"/>
        <end position="177"/>
    </location>
</feature>
<feature type="strand" evidence="20">
    <location>
        <begin position="182"/>
        <end position="185"/>
    </location>
</feature>
<feature type="strand" evidence="20">
    <location>
        <begin position="192"/>
        <end position="194"/>
    </location>
</feature>
<feature type="strand" evidence="20">
    <location>
        <begin position="199"/>
        <end position="202"/>
    </location>
</feature>
<feature type="strand" evidence="20">
    <location>
        <begin position="205"/>
        <end position="208"/>
    </location>
</feature>
<feature type="helix" evidence="20">
    <location>
        <begin position="209"/>
        <end position="213"/>
    </location>
</feature>
<feature type="helix" evidence="20">
    <location>
        <begin position="216"/>
        <end position="220"/>
    </location>
</feature>
<feature type="helix" evidence="20">
    <location>
        <begin position="222"/>
        <end position="238"/>
    </location>
</feature>
<feature type="helix" evidence="20">
    <location>
        <begin position="243"/>
        <end position="259"/>
    </location>
</feature>
<feature type="strand" evidence="20">
    <location>
        <begin position="267"/>
        <end position="272"/>
    </location>
</feature>
<feature type="strand" evidence="20">
    <location>
        <begin position="277"/>
        <end position="279"/>
    </location>
</feature>
<feature type="strand" evidence="20">
    <location>
        <begin position="285"/>
        <end position="293"/>
    </location>
</feature>
<feature type="strand" evidence="20">
    <location>
        <begin position="296"/>
        <end position="299"/>
    </location>
</feature>
<feature type="helix" evidence="20">
    <location>
        <begin position="307"/>
        <end position="332"/>
    </location>
</feature>